<proteinExistence type="inferred from homology"/>
<dbReference type="EMBL" id="CP000395">
    <property type="protein sequence ID" value="ABH02012.1"/>
    <property type="molecule type" value="Genomic_DNA"/>
</dbReference>
<dbReference type="EMBL" id="CP002933">
    <property type="protein sequence ID" value="AEL69958.1"/>
    <property type="molecule type" value="Genomic_DNA"/>
</dbReference>
<dbReference type="RefSeq" id="WP_004789371.1">
    <property type="nucleotide sequence ID" value="NZ_CP160066.1"/>
</dbReference>
<dbReference type="SMR" id="Q0SMB6"/>
<dbReference type="STRING" id="29518.BLA32_00530"/>
<dbReference type="GeneID" id="83866221"/>
<dbReference type="KEGG" id="baf:BAPKO_0784"/>
<dbReference type="KEGG" id="bafz:BafPKo_0765"/>
<dbReference type="PATRIC" id="fig|390236.22.peg.731"/>
<dbReference type="eggNOG" id="COG0234">
    <property type="taxonomic scope" value="Bacteria"/>
</dbReference>
<dbReference type="HOGENOM" id="CLU_132825_2_0_12"/>
<dbReference type="OrthoDB" id="9806791at2"/>
<dbReference type="Proteomes" id="UP000005216">
    <property type="component" value="Chromosome"/>
</dbReference>
<dbReference type="GO" id="GO:0005737">
    <property type="term" value="C:cytoplasm"/>
    <property type="evidence" value="ECO:0007669"/>
    <property type="project" value="UniProtKB-SubCell"/>
</dbReference>
<dbReference type="GO" id="GO:0005524">
    <property type="term" value="F:ATP binding"/>
    <property type="evidence" value="ECO:0007669"/>
    <property type="project" value="InterPro"/>
</dbReference>
<dbReference type="GO" id="GO:0046872">
    <property type="term" value="F:metal ion binding"/>
    <property type="evidence" value="ECO:0007669"/>
    <property type="project" value="TreeGrafter"/>
</dbReference>
<dbReference type="GO" id="GO:0044183">
    <property type="term" value="F:protein folding chaperone"/>
    <property type="evidence" value="ECO:0007669"/>
    <property type="project" value="InterPro"/>
</dbReference>
<dbReference type="GO" id="GO:0051087">
    <property type="term" value="F:protein-folding chaperone binding"/>
    <property type="evidence" value="ECO:0007669"/>
    <property type="project" value="TreeGrafter"/>
</dbReference>
<dbReference type="GO" id="GO:0051082">
    <property type="term" value="F:unfolded protein binding"/>
    <property type="evidence" value="ECO:0007669"/>
    <property type="project" value="TreeGrafter"/>
</dbReference>
<dbReference type="GO" id="GO:0051085">
    <property type="term" value="P:chaperone cofactor-dependent protein refolding"/>
    <property type="evidence" value="ECO:0007669"/>
    <property type="project" value="TreeGrafter"/>
</dbReference>
<dbReference type="CDD" id="cd00320">
    <property type="entry name" value="cpn10"/>
    <property type="match status" value="1"/>
</dbReference>
<dbReference type="FunFam" id="2.30.33.40:FF:000016">
    <property type="entry name" value="10 kDa chaperonin"/>
    <property type="match status" value="1"/>
</dbReference>
<dbReference type="Gene3D" id="2.30.33.40">
    <property type="entry name" value="GroES chaperonin"/>
    <property type="match status" value="1"/>
</dbReference>
<dbReference type="HAMAP" id="MF_00580">
    <property type="entry name" value="CH10"/>
    <property type="match status" value="1"/>
</dbReference>
<dbReference type="InterPro" id="IPR020818">
    <property type="entry name" value="Chaperonin_GroES"/>
</dbReference>
<dbReference type="InterPro" id="IPR037124">
    <property type="entry name" value="Chaperonin_GroES_sf"/>
</dbReference>
<dbReference type="InterPro" id="IPR018369">
    <property type="entry name" value="Chaprnonin_Cpn10_CS"/>
</dbReference>
<dbReference type="InterPro" id="IPR011032">
    <property type="entry name" value="GroES-like_sf"/>
</dbReference>
<dbReference type="NCBIfam" id="NF001531">
    <property type="entry name" value="PRK00364.2-2"/>
    <property type="match status" value="1"/>
</dbReference>
<dbReference type="NCBIfam" id="NF001538">
    <property type="entry name" value="PRK00364.3-4"/>
    <property type="match status" value="1"/>
</dbReference>
<dbReference type="PANTHER" id="PTHR10772">
    <property type="entry name" value="10 KDA HEAT SHOCK PROTEIN"/>
    <property type="match status" value="1"/>
</dbReference>
<dbReference type="PANTHER" id="PTHR10772:SF58">
    <property type="entry name" value="CO-CHAPERONIN GROES"/>
    <property type="match status" value="1"/>
</dbReference>
<dbReference type="Pfam" id="PF00166">
    <property type="entry name" value="Cpn10"/>
    <property type="match status" value="1"/>
</dbReference>
<dbReference type="PRINTS" id="PR00297">
    <property type="entry name" value="CHAPERONIN10"/>
</dbReference>
<dbReference type="SMART" id="SM00883">
    <property type="entry name" value="Cpn10"/>
    <property type="match status" value="1"/>
</dbReference>
<dbReference type="SUPFAM" id="SSF50129">
    <property type="entry name" value="GroES-like"/>
    <property type="match status" value="1"/>
</dbReference>
<dbReference type="PROSITE" id="PS00681">
    <property type="entry name" value="CHAPERONINS_CPN10"/>
    <property type="match status" value="1"/>
</dbReference>
<sequence length="90" mass="9920">MKNIKPLADRVLIKIKEAESKTISGLYIPENAKEKTNIGTVIAIGSNKEEITVKVGDTVLYEKYAGAAVKIENKEHLILKAKEIVAIIEE</sequence>
<name>CH10_BORAP</name>
<accession>Q0SMB6</accession>
<accession>G0IRJ2</accession>
<gene>
    <name evidence="1" type="primary">groES</name>
    <name evidence="1" type="synonym">groS</name>
    <name type="ordered locus">BAPKO_0784</name>
    <name type="ordered locus">BafPKo_0765</name>
</gene>
<protein>
    <recommendedName>
        <fullName evidence="1">Co-chaperonin GroES</fullName>
    </recommendedName>
    <alternativeName>
        <fullName evidence="1">10 kDa chaperonin</fullName>
    </alternativeName>
    <alternativeName>
        <fullName evidence="1">Chaperonin-10</fullName>
        <shortName evidence="1">Cpn10</shortName>
    </alternativeName>
</protein>
<feature type="chain" id="PRO_1000025220" description="Co-chaperonin GroES">
    <location>
        <begin position="1"/>
        <end position="90"/>
    </location>
</feature>
<evidence type="ECO:0000255" key="1">
    <source>
        <dbReference type="HAMAP-Rule" id="MF_00580"/>
    </source>
</evidence>
<organism>
    <name type="scientific">Borreliella afzelii (strain PKo)</name>
    <name type="common">Borrelia afzelii</name>
    <dbReference type="NCBI Taxonomy" id="390236"/>
    <lineage>
        <taxon>Bacteria</taxon>
        <taxon>Pseudomonadati</taxon>
        <taxon>Spirochaetota</taxon>
        <taxon>Spirochaetia</taxon>
        <taxon>Spirochaetales</taxon>
        <taxon>Borreliaceae</taxon>
        <taxon>Borreliella</taxon>
    </lineage>
</organism>
<comment type="function">
    <text evidence="1">Together with the chaperonin GroEL, plays an essential role in assisting protein folding. The GroEL-GroES system forms a nano-cage that allows encapsulation of the non-native substrate proteins and provides a physical environment optimized to promote and accelerate protein folding. GroES binds to the apical surface of the GroEL ring, thereby capping the opening of the GroEL channel.</text>
</comment>
<comment type="subunit">
    <text evidence="1">Heptamer of 7 subunits arranged in a ring. Interacts with the chaperonin GroEL.</text>
</comment>
<comment type="subcellular location">
    <subcellularLocation>
        <location evidence="1">Cytoplasm</location>
    </subcellularLocation>
</comment>
<comment type="similarity">
    <text evidence="1">Belongs to the GroES chaperonin family.</text>
</comment>
<keyword id="KW-0143">Chaperone</keyword>
<keyword id="KW-0963">Cytoplasm</keyword>
<reference key="1">
    <citation type="journal article" date="2006" name="BMC Genomics">
        <title>Comparative genome analysis: selection pressure on the Borrelia vls cassettes is essential for infectivity.</title>
        <authorList>
            <person name="Gloeckner G."/>
            <person name="Schulte-Spechtel U."/>
            <person name="Schilhabel M."/>
            <person name="Felder M."/>
            <person name="Suehnel J."/>
            <person name="Wilske B."/>
            <person name="Platzer M."/>
        </authorList>
    </citation>
    <scope>NUCLEOTIDE SEQUENCE [LARGE SCALE GENOMIC DNA]</scope>
    <source>
        <strain>PKo</strain>
    </source>
</reference>
<reference key="2">
    <citation type="journal article" date="2011" name="J. Bacteriol.">
        <title>Whole-genome sequences of two Borrelia afzelii and two Borrelia garinii Lyme disease agent isolates.</title>
        <authorList>
            <person name="Casjens S.R."/>
            <person name="Mongodin E.F."/>
            <person name="Qiu W.G."/>
            <person name="Dunn J.J."/>
            <person name="Luft B.J."/>
            <person name="Fraser-Liggett C.M."/>
            <person name="Schutzer S.E."/>
        </authorList>
    </citation>
    <scope>NUCLEOTIDE SEQUENCE [LARGE SCALE GENOMIC DNA]</scope>
    <source>
        <strain>PKo</strain>
    </source>
</reference>